<evidence type="ECO:0000255" key="1">
    <source>
        <dbReference type="PROSITE-ProRule" id="PRU00794"/>
    </source>
</evidence>
<evidence type="ECO:0000269" key="2">
    <source>
    </source>
</evidence>
<evidence type="ECO:0000305" key="3"/>
<accession>P21290</accession>
<accession>P41445</accession>
<name>ADPP_NPVAC</name>
<feature type="chain" id="PRO_0000132975" description="Protein ADP-ribose pyrophosphatase ORF38">
    <location>
        <begin position="1"/>
        <end position="216"/>
    </location>
</feature>
<feature type="domain" description="Nudix hydrolase" evidence="1">
    <location>
        <begin position="1"/>
        <end position="177"/>
    </location>
</feature>
<feature type="short sequence motif" description="Nudix box" evidence="1">
    <location>
        <begin position="48"/>
        <end position="70"/>
    </location>
</feature>
<feature type="sequence conflict" description="In Ref. 2; AAA46681." evidence="3" ref="2">
    <location>
        <position position="31"/>
    </location>
</feature>
<dbReference type="EC" id="3.6.1.13" evidence="2"/>
<dbReference type="EMBL" id="L22858">
    <property type="protein sequence ID" value="AAA66668.1"/>
    <property type="molecule type" value="Genomic_DNA"/>
</dbReference>
<dbReference type="EMBL" id="M37122">
    <property type="protein sequence ID" value="AAA46681.1"/>
    <property type="status" value="ALT_FRAME"/>
    <property type="molecule type" value="Genomic_DNA"/>
</dbReference>
<dbReference type="PIR" id="A45355">
    <property type="entry name" value="A45355"/>
</dbReference>
<dbReference type="PIR" id="F72854">
    <property type="entry name" value="F72854"/>
</dbReference>
<dbReference type="RefSeq" id="NP_054067.1">
    <property type="nucleotide sequence ID" value="NC_001623.1"/>
</dbReference>
<dbReference type="GeneID" id="1403870"/>
<dbReference type="KEGG" id="vg:1403870"/>
<dbReference type="OrthoDB" id="12499at10239"/>
<dbReference type="Proteomes" id="UP000008292">
    <property type="component" value="Segment"/>
</dbReference>
<dbReference type="GO" id="GO:0030430">
    <property type="term" value="C:host cell cytoplasm"/>
    <property type="evidence" value="ECO:0007669"/>
    <property type="project" value="UniProtKB-SubCell"/>
</dbReference>
<dbReference type="GO" id="GO:0042025">
    <property type="term" value="C:host cell nucleus"/>
    <property type="evidence" value="ECO:0007669"/>
    <property type="project" value="UniProtKB-SubCell"/>
</dbReference>
<dbReference type="GO" id="GO:0047631">
    <property type="term" value="F:ADP-ribose diphosphatase activity"/>
    <property type="evidence" value="ECO:0007669"/>
    <property type="project" value="UniProtKB-EC"/>
</dbReference>
<dbReference type="GO" id="GO:0046872">
    <property type="term" value="F:metal ion binding"/>
    <property type="evidence" value="ECO:0007669"/>
    <property type="project" value="UniProtKB-KW"/>
</dbReference>
<dbReference type="Gene3D" id="3.90.79.10">
    <property type="entry name" value="Nucleoside Triphosphate Pyrophosphohydrolase"/>
    <property type="match status" value="1"/>
</dbReference>
<dbReference type="InterPro" id="IPR015797">
    <property type="entry name" value="NUDIX_hydrolase-like_dom_sf"/>
</dbReference>
<dbReference type="InterPro" id="IPR000086">
    <property type="entry name" value="NUDIX_hydrolase_dom"/>
</dbReference>
<dbReference type="Pfam" id="PF00293">
    <property type="entry name" value="NUDIX"/>
    <property type="match status" value="1"/>
</dbReference>
<dbReference type="SUPFAM" id="SSF55811">
    <property type="entry name" value="Nudix"/>
    <property type="match status" value="1"/>
</dbReference>
<dbReference type="PROSITE" id="PS51462">
    <property type="entry name" value="NUDIX"/>
    <property type="match status" value="1"/>
</dbReference>
<comment type="function">
    <text evidence="2">Plays an important role in virus replication most probably through its hydrolyzing ADP-ribose activity in host cells. May function in viral DNA replication or transcription directly, or by removing toxic substances or metabolic intermediates.</text>
</comment>
<comment type="catalytic activity">
    <reaction evidence="2">
        <text>ADP-D-ribose + H2O = D-ribose 5-phosphate + AMP + 2 H(+)</text>
        <dbReference type="Rhea" id="RHEA:10412"/>
        <dbReference type="ChEBI" id="CHEBI:15377"/>
        <dbReference type="ChEBI" id="CHEBI:15378"/>
        <dbReference type="ChEBI" id="CHEBI:57967"/>
        <dbReference type="ChEBI" id="CHEBI:78346"/>
        <dbReference type="ChEBI" id="CHEBI:456215"/>
        <dbReference type="EC" id="3.6.1.13"/>
    </reaction>
</comment>
<comment type="subcellular location">
    <subcellularLocation>
        <location evidence="2">Host cytoplasm</location>
    </subcellularLocation>
    <subcellularLocation>
        <location evidence="2">Host nucleus</location>
    </subcellularLocation>
</comment>
<comment type="sequence caution" evidence="3">
    <conflict type="frameshift">
        <sequence resource="EMBL-CDS" id="AAA46681"/>
    </conflict>
</comment>
<reference key="1">
    <citation type="journal article" date="1994" name="Virology">
        <title>The complete DNA sequence of Autographa californica nuclear polyhedrosis virus.</title>
        <authorList>
            <person name="Ayres M.D."/>
            <person name="Howard S.C."/>
            <person name="Kuzio J."/>
            <person name="Lopez-Ferber M."/>
            <person name="Possee R.D."/>
        </authorList>
    </citation>
    <scope>NUCLEOTIDE SEQUENCE [LARGE SCALE GENOMIC DNA]</scope>
    <source>
        <strain>C6</strain>
    </source>
</reference>
<reference key="2">
    <citation type="journal article" date="1990" name="Virology">
        <title>Nucleotide sequence and characterization of the 39K gene region of Autographa californica nuclear polyhedrosis virus.</title>
        <authorList>
            <person name="Guarino L.A."/>
            <person name="Smith M.W."/>
        </authorList>
    </citation>
    <scope>NUCLEOTIDE SEQUENCE [GENOMIC DNA] OF 5-216</scope>
</reference>
<reference key="3">
    <citation type="journal article" date="2007" name="Virology">
        <title>AcMNPV ORF38 protein has the activity of ADP-ribose pyrophosphatase and is important for virus replication.</title>
        <authorList>
            <person name="Ge J."/>
            <person name="Wei Z."/>
            <person name="Huang Y."/>
            <person name="Yin J."/>
            <person name="Zhou Z."/>
            <person name="Zhong J."/>
        </authorList>
    </citation>
    <scope>FUNCTION</scope>
    <scope>SUBCELLULAR LOCATION</scope>
    <scope>CATALYTIC ACTIVITY</scope>
</reference>
<organismHost>
    <name type="scientific">Lepidoptera</name>
    <name type="common">butterflies and moths</name>
    <dbReference type="NCBI Taxonomy" id="7088"/>
</organismHost>
<keyword id="KW-1035">Host cytoplasm</keyword>
<keyword id="KW-1048">Host nucleus</keyword>
<keyword id="KW-0378">Hydrolase</keyword>
<keyword id="KW-0479">Metal-binding</keyword>
<keyword id="KW-1185">Reference proteome</keyword>
<organism>
    <name type="scientific">Autographa californica nuclear polyhedrosis virus</name>
    <name type="common">AcMNPV</name>
    <dbReference type="NCBI Taxonomy" id="46015"/>
    <lineage>
        <taxon>Viruses</taxon>
        <taxon>Viruses incertae sedis</taxon>
        <taxon>Naldaviricetes</taxon>
        <taxon>Lefavirales</taxon>
        <taxon>Baculoviridae</taxon>
        <taxon>Alphabaculovirus</taxon>
        <taxon>Alphabaculovirus aucalifornicae</taxon>
    </lineage>
</organism>
<protein>
    <recommendedName>
        <fullName>Protein ADP-ribose pyrophosphatase ORF38</fullName>
    </recommendedName>
    <alternativeName>
        <fullName>ORF7</fullName>
        <ecNumber evidence="2">3.6.1.13</ecNumber>
    </alternativeName>
</protein>
<proteinExistence type="evidence at protein level"/>
<sequence length="216" mass="25257">MRNAAGLFMIIEPDKAVLLCARRAYRSANAPAADMNDTFLEKISIPRGHRDCCDAKVYETAVREFVEETGRFFDSAFIYKLPFTLQWKDDGVTYKYLIYVGVVRGNLINVNAKPNTYTVKLLPGTFGNDYRIMLKPRRFNCEIARSLAIVPLNKYFNYMNDKQLITYDYSNYIEFFDFVRSVKARFDNRQLQDFFYATLKKIDNDAPQKLHALRRV</sequence>